<protein>
    <recommendedName>
        <fullName>TD and POZ domain-containing protein 4</fullName>
    </recommendedName>
</protein>
<gene>
    <name evidence="5" type="primary">Tdpoz4</name>
</gene>
<reference evidence="4 5" key="1">
    <citation type="journal article" date="2004" name="Gene">
        <title>TDPOZ, a family of bipartite animal and plant proteins that contain the TRAF (TD) and POZ/BTB domains.</title>
        <authorList>
            <person name="Huang C.-J."/>
            <person name="Chen C.-Y."/>
            <person name="Chen H.-H."/>
            <person name="Tsai S.-F."/>
            <person name="Choo K.-B."/>
        </authorList>
    </citation>
    <scope>NUCLEOTIDE SEQUENCE [GENOMIC DNA]</scope>
    <scope>DEVELOPMENTAL STAGE</scope>
    <source>
        <strain evidence="5">129/Sv</strain>
    </source>
</reference>
<reference key="2">
    <citation type="journal article" date="2009" name="PLoS Biol.">
        <title>Lineage-specific biology revealed by a finished genome assembly of the mouse.</title>
        <authorList>
            <person name="Church D.M."/>
            <person name="Goodstadt L."/>
            <person name="Hillier L.W."/>
            <person name="Zody M.C."/>
            <person name="Goldstein S."/>
            <person name="She X."/>
            <person name="Bult C.J."/>
            <person name="Agarwala R."/>
            <person name="Cherry J.L."/>
            <person name="DiCuccio M."/>
            <person name="Hlavina W."/>
            <person name="Kapustin Y."/>
            <person name="Meric P."/>
            <person name="Maglott D."/>
            <person name="Birtle Z."/>
            <person name="Marques A.C."/>
            <person name="Graves T."/>
            <person name="Zhou S."/>
            <person name="Teague B."/>
            <person name="Potamousis K."/>
            <person name="Churas C."/>
            <person name="Place M."/>
            <person name="Herschleb J."/>
            <person name="Runnheim R."/>
            <person name="Forrest D."/>
            <person name="Amos-Landgraf J."/>
            <person name="Schwartz D.C."/>
            <person name="Cheng Z."/>
            <person name="Lindblad-Toh K."/>
            <person name="Eichler E.E."/>
            <person name="Ponting C.P."/>
        </authorList>
    </citation>
    <scope>NUCLEOTIDE SEQUENCE [LARGE SCALE GENOMIC DNA]</scope>
    <source>
        <strain>C57BL/6J</strain>
    </source>
</reference>
<reference key="3">
    <citation type="journal article" date="2004" name="Genome Res.">
        <title>The status, quality, and expansion of the NIH full-length cDNA project: the Mammalian Gene Collection (MGC).</title>
        <authorList>
            <consortium name="The MGC Project Team"/>
        </authorList>
    </citation>
    <scope>NUCLEOTIDE SEQUENCE [LARGE SCALE MRNA]</scope>
</reference>
<feature type="chain" id="PRO_0000191626" description="TD and POZ domain-containing protein 4">
    <location>
        <begin position="1"/>
        <end position="370"/>
    </location>
</feature>
<feature type="domain" description="MATH" evidence="2">
    <location>
        <begin position="19"/>
        <end position="149"/>
    </location>
</feature>
<feature type="domain" description="BTB" evidence="1">
    <location>
        <begin position="188"/>
        <end position="251"/>
    </location>
</feature>
<feature type="sequence conflict" description="In Ref. 1; AAO20102 and 3; AAI15627." evidence="4" ref="1 3">
    <original>D</original>
    <variation>H</variation>
    <location>
        <position position="12"/>
    </location>
</feature>
<feature type="sequence conflict" description="In Ref. 1; AAO20102 and 3; AAI15627." evidence="4" ref="1 3">
    <original>R</original>
    <variation>S</variation>
    <location>
        <position position="23"/>
    </location>
</feature>
<feature type="sequence conflict" description="In Ref. 1; AAO20102 and 3; AAI15627." evidence="4" ref="1 3">
    <original>L</original>
    <variation>P</variation>
    <location>
        <position position="43"/>
    </location>
</feature>
<feature type="sequence conflict" description="In Ref. 1; AAO20102 and 3; AAI15627." evidence="4" ref="1 3">
    <original>N</original>
    <variation>D</variation>
    <location>
        <position position="176"/>
    </location>
</feature>
<feature type="sequence conflict" description="In Ref. 1; AAO20102 and 3; AAI15627." evidence="4" ref="1 3">
    <original>E</original>
    <variation>Q</variation>
    <location>
        <position position="220"/>
    </location>
</feature>
<feature type="sequence conflict" description="In Ref. 1; AAO20102 and 3; AAI15627." evidence="4" ref="1 3">
    <original>E</original>
    <variation>K</variation>
    <location>
        <position position="273"/>
    </location>
</feature>
<feature type="sequence conflict" description="In Ref. 1; AAO20102 and 3; AAI15627." evidence="4" ref="1 3">
    <original>M</original>
    <variation>K</variation>
    <location>
        <position position="276"/>
    </location>
</feature>
<feature type="sequence conflict" description="In Ref. 1; AAO20102 and 3; AAI15627." evidence="4" ref="1 3">
    <original>S</original>
    <variation>N</variation>
    <location>
        <position position="286"/>
    </location>
</feature>
<feature type="sequence conflict" description="In Ref. 1; AAO20102 and 3; AAI15627." evidence="4" ref="1 3">
    <original>L</original>
    <variation>V</variation>
    <location>
        <position position="307"/>
    </location>
</feature>
<keyword id="KW-1185">Reference proteome</keyword>
<evidence type="ECO:0000255" key="1">
    <source>
        <dbReference type="PROSITE-ProRule" id="PRU00037"/>
    </source>
</evidence>
<evidence type="ECO:0000255" key="2">
    <source>
        <dbReference type="PROSITE-ProRule" id="PRU00129"/>
    </source>
</evidence>
<evidence type="ECO:0000269" key="3">
    <source>
    </source>
</evidence>
<evidence type="ECO:0000305" key="4"/>
<evidence type="ECO:0000312" key="5">
    <source>
        <dbReference type="EMBL" id="AAO20102.1"/>
    </source>
</evidence>
<comment type="developmental stage">
    <text evidence="3">Strongly expressed in 2-cell embryos. No expression detected in other embryonic stages or in adult testis.</text>
</comment>
<comment type="similarity">
    <text evidence="4">Belongs to the Tdpoz family.</text>
</comment>
<organism>
    <name type="scientific">Mus musculus</name>
    <name type="common">Mouse</name>
    <dbReference type="NCBI Taxonomy" id="10090"/>
    <lineage>
        <taxon>Eukaryota</taxon>
        <taxon>Metazoa</taxon>
        <taxon>Chordata</taxon>
        <taxon>Craniata</taxon>
        <taxon>Vertebrata</taxon>
        <taxon>Euteleostomi</taxon>
        <taxon>Mammalia</taxon>
        <taxon>Eutheria</taxon>
        <taxon>Euarchontoglires</taxon>
        <taxon>Glires</taxon>
        <taxon>Rodentia</taxon>
        <taxon>Myomorpha</taxon>
        <taxon>Muroidea</taxon>
        <taxon>Muridae</taxon>
        <taxon>Murinae</taxon>
        <taxon>Mus</taxon>
        <taxon>Mus</taxon>
    </lineage>
</organism>
<name>TDPZ4_MOUSE</name>
<accession>Q6YCH2</accession>
<accession>E9QJY8</accession>
<accession>Q14BT0</accession>
<dbReference type="EMBL" id="AY159314">
    <property type="protein sequence ID" value="AAO20102.1"/>
    <property type="molecule type" value="Genomic_DNA"/>
</dbReference>
<dbReference type="EMBL" id="AC130840">
    <property type="status" value="NOT_ANNOTATED_CDS"/>
    <property type="molecule type" value="Genomic_DNA"/>
</dbReference>
<dbReference type="EMBL" id="BC115626">
    <property type="protein sequence ID" value="AAI15627.1"/>
    <property type="molecule type" value="mRNA"/>
</dbReference>
<dbReference type="CCDS" id="CCDS38528.1"/>
<dbReference type="RefSeq" id="NP_997155.2">
    <property type="nucleotide sequence ID" value="NM_207272.2"/>
</dbReference>
<dbReference type="SMR" id="Q6YCH2"/>
<dbReference type="FunCoup" id="Q6YCH2">
    <property type="interactions" value="106"/>
</dbReference>
<dbReference type="STRING" id="10090.ENSMUSP00000075338"/>
<dbReference type="PaxDb" id="10090-ENSMUSP00000075338"/>
<dbReference type="DNASU" id="399675"/>
<dbReference type="Ensembl" id="ENSMUST00000075953.2">
    <property type="protein sequence ID" value="ENSMUSP00000075338.2"/>
    <property type="gene ID" value="ENSMUSG00000060256.2"/>
</dbReference>
<dbReference type="GeneID" id="399675"/>
<dbReference type="KEGG" id="mmu:399675"/>
<dbReference type="UCSC" id="uc008qfn.1">
    <property type="organism name" value="mouse"/>
</dbReference>
<dbReference type="AGR" id="MGI:3027904"/>
<dbReference type="CTD" id="399675"/>
<dbReference type="MGI" id="MGI:3027904">
    <property type="gene designation" value="Tdpoz4"/>
</dbReference>
<dbReference type="VEuPathDB" id="HostDB:ENSMUSG00000060256"/>
<dbReference type="eggNOG" id="KOG1987">
    <property type="taxonomic scope" value="Eukaryota"/>
</dbReference>
<dbReference type="GeneTree" id="ENSGT00940000154376"/>
<dbReference type="HOGENOM" id="CLU_004253_2_0_1"/>
<dbReference type="InParanoid" id="Q6YCH2"/>
<dbReference type="OrthoDB" id="9620072at2759"/>
<dbReference type="PhylomeDB" id="Q6YCH2"/>
<dbReference type="TreeFam" id="TF313419"/>
<dbReference type="BioGRID-ORCS" id="399675">
    <property type="hits" value="4 hits in 75 CRISPR screens"/>
</dbReference>
<dbReference type="PRO" id="PR:Q6YCH2"/>
<dbReference type="Proteomes" id="UP000000589">
    <property type="component" value="Chromosome 3"/>
</dbReference>
<dbReference type="RNAct" id="Q6YCH2">
    <property type="molecule type" value="protein"/>
</dbReference>
<dbReference type="Bgee" id="ENSMUSG00000060256">
    <property type="expression patterns" value="Expressed in blastoderm cell in morula and 2 other cell types or tissues"/>
</dbReference>
<dbReference type="GO" id="GO:0030163">
    <property type="term" value="P:protein catabolic process"/>
    <property type="evidence" value="ECO:0007669"/>
    <property type="project" value="UniProtKB-ARBA"/>
</dbReference>
<dbReference type="CDD" id="cd18521">
    <property type="entry name" value="BACK_Tdpoz"/>
    <property type="match status" value="1"/>
</dbReference>
<dbReference type="CDD" id="cd18344">
    <property type="entry name" value="BTB_POZ_TDPOZ"/>
    <property type="match status" value="1"/>
</dbReference>
<dbReference type="FunFam" id="3.30.710.10:FF:000147">
    <property type="entry name" value="Predicted gene 4858"/>
    <property type="match status" value="1"/>
</dbReference>
<dbReference type="FunFam" id="2.60.210.10:FF:000003">
    <property type="entry name" value="Speckle-type POZ protein-like a"/>
    <property type="match status" value="1"/>
</dbReference>
<dbReference type="Gene3D" id="6.10.250.3030">
    <property type="match status" value="1"/>
</dbReference>
<dbReference type="Gene3D" id="6.20.250.50">
    <property type="match status" value="1"/>
</dbReference>
<dbReference type="Gene3D" id="2.60.210.10">
    <property type="entry name" value="Apoptosis, Tumor Necrosis Factor Receptor Associated Protein 2, Chain A"/>
    <property type="match status" value="1"/>
</dbReference>
<dbReference type="Gene3D" id="3.30.710.10">
    <property type="entry name" value="Potassium Channel Kv1.1, Chain A"/>
    <property type="match status" value="1"/>
</dbReference>
<dbReference type="InterPro" id="IPR000210">
    <property type="entry name" value="BTB/POZ_dom"/>
</dbReference>
<dbReference type="InterPro" id="IPR002083">
    <property type="entry name" value="MATH/TRAF_dom"/>
</dbReference>
<dbReference type="InterPro" id="IPR011333">
    <property type="entry name" value="SKP1/BTB/POZ_sf"/>
</dbReference>
<dbReference type="InterPro" id="IPR008974">
    <property type="entry name" value="TRAF-like"/>
</dbReference>
<dbReference type="PANTHER" id="PTHR24413">
    <property type="entry name" value="SPECKLE-TYPE POZ PROTEIN"/>
    <property type="match status" value="1"/>
</dbReference>
<dbReference type="Pfam" id="PF00651">
    <property type="entry name" value="BTB"/>
    <property type="match status" value="1"/>
</dbReference>
<dbReference type="Pfam" id="PF22486">
    <property type="entry name" value="MATH_2"/>
    <property type="match status" value="1"/>
</dbReference>
<dbReference type="SMART" id="SM00225">
    <property type="entry name" value="BTB"/>
    <property type="match status" value="1"/>
</dbReference>
<dbReference type="SUPFAM" id="SSF54695">
    <property type="entry name" value="POZ domain"/>
    <property type="match status" value="1"/>
</dbReference>
<dbReference type="SUPFAM" id="SSF49599">
    <property type="entry name" value="TRAF domain-like"/>
    <property type="match status" value="1"/>
</dbReference>
<dbReference type="PROSITE" id="PS50097">
    <property type="entry name" value="BTB"/>
    <property type="match status" value="1"/>
</dbReference>
<dbReference type="PROSITE" id="PS50144">
    <property type="entry name" value="MATH"/>
    <property type="match status" value="1"/>
</dbReference>
<sequence length="370" mass="42196">MSGELEAKSRGDTQSHEQKLCYRWTISNFSFFVEETEEYITSLVFSLEDNDKMTWCLRVYPTGVDEKNKDYVSLYLILLSCEKGSVWAKFEVCILNAKGEKCNTERIPSFSRIQPHQPFGFEKFITRDSFLSPAQVLTPDDKFTLLCKVSVLQDSFSISGQNPRPAIKVTRCTLENDVGELWENPLFTDCSLLVAGHEFRAHKAILAARSPVFRAMFEHEMEERLTNCVEIHDLDPQVFKEMMGFIYTGKVPHLHSHSMACDLLAAADRYGLEDLMVMCEDALCRSLSVENAAHTLIVADLHSTEHLKTQALDFIIVYASEVSKTSGWMSMVESHPRLVAEAFHSLASAQRVFWALPFKQLKWSLRPTQL</sequence>
<proteinExistence type="evidence at transcript level"/>